<protein>
    <recommendedName>
        <fullName evidence="1">Triosephosphate isomerase</fullName>
        <shortName evidence="1">TIM</shortName>
        <shortName evidence="1">TPI</shortName>
        <ecNumber evidence="1">5.3.1.1</ecNumber>
    </recommendedName>
    <alternativeName>
        <fullName evidence="1">Triose-phosphate isomerase</fullName>
    </alternativeName>
</protein>
<organism>
    <name type="scientific">Xanthomonas oryzae pv. oryzae (strain PXO99A)</name>
    <dbReference type="NCBI Taxonomy" id="360094"/>
    <lineage>
        <taxon>Bacteria</taxon>
        <taxon>Pseudomonadati</taxon>
        <taxon>Pseudomonadota</taxon>
        <taxon>Gammaproteobacteria</taxon>
        <taxon>Lysobacterales</taxon>
        <taxon>Lysobacteraceae</taxon>
        <taxon>Xanthomonas</taxon>
    </lineage>
</organism>
<feature type="chain" id="PRO_1000096549" description="Triosephosphate isomerase">
    <location>
        <begin position="1"/>
        <end position="251"/>
    </location>
</feature>
<feature type="active site" description="Electrophile" evidence="1">
    <location>
        <position position="94"/>
    </location>
</feature>
<feature type="active site" description="Proton acceptor" evidence="1">
    <location>
        <position position="166"/>
    </location>
</feature>
<feature type="binding site" evidence="1">
    <location>
        <begin position="9"/>
        <end position="11"/>
    </location>
    <ligand>
        <name>substrate</name>
    </ligand>
</feature>
<feature type="binding site" evidence="1">
    <location>
        <position position="172"/>
    </location>
    <ligand>
        <name>substrate</name>
    </ligand>
</feature>
<feature type="binding site" evidence="1">
    <location>
        <position position="211"/>
    </location>
    <ligand>
        <name>substrate</name>
    </ligand>
</feature>
<feature type="binding site" evidence="1">
    <location>
        <begin position="232"/>
        <end position="233"/>
    </location>
    <ligand>
        <name>substrate</name>
    </ligand>
</feature>
<accession>B2SVM1</accession>
<dbReference type="EC" id="5.3.1.1" evidence="1"/>
<dbReference type="EMBL" id="CP000967">
    <property type="protein sequence ID" value="ACD60095.1"/>
    <property type="molecule type" value="Genomic_DNA"/>
</dbReference>
<dbReference type="RefSeq" id="WP_011409061.1">
    <property type="nucleotide sequence ID" value="NC_010717.2"/>
</dbReference>
<dbReference type="SMR" id="B2SVM1"/>
<dbReference type="KEGG" id="xop:PXO_01285"/>
<dbReference type="eggNOG" id="COG0149">
    <property type="taxonomic scope" value="Bacteria"/>
</dbReference>
<dbReference type="HOGENOM" id="CLU_024251_2_3_6"/>
<dbReference type="UniPathway" id="UPA00109">
    <property type="reaction ID" value="UER00189"/>
</dbReference>
<dbReference type="UniPathway" id="UPA00138"/>
<dbReference type="Proteomes" id="UP000001740">
    <property type="component" value="Chromosome"/>
</dbReference>
<dbReference type="GO" id="GO:0005829">
    <property type="term" value="C:cytosol"/>
    <property type="evidence" value="ECO:0007669"/>
    <property type="project" value="TreeGrafter"/>
</dbReference>
<dbReference type="GO" id="GO:0004807">
    <property type="term" value="F:triose-phosphate isomerase activity"/>
    <property type="evidence" value="ECO:0007669"/>
    <property type="project" value="UniProtKB-UniRule"/>
</dbReference>
<dbReference type="GO" id="GO:0006094">
    <property type="term" value="P:gluconeogenesis"/>
    <property type="evidence" value="ECO:0007669"/>
    <property type="project" value="UniProtKB-UniRule"/>
</dbReference>
<dbReference type="GO" id="GO:0046166">
    <property type="term" value="P:glyceraldehyde-3-phosphate biosynthetic process"/>
    <property type="evidence" value="ECO:0007669"/>
    <property type="project" value="TreeGrafter"/>
</dbReference>
<dbReference type="GO" id="GO:0019563">
    <property type="term" value="P:glycerol catabolic process"/>
    <property type="evidence" value="ECO:0007669"/>
    <property type="project" value="TreeGrafter"/>
</dbReference>
<dbReference type="GO" id="GO:0006096">
    <property type="term" value="P:glycolytic process"/>
    <property type="evidence" value="ECO:0007669"/>
    <property type="project" value="UniProtKB-UniRule"/>
</dbReference>
<dbReference type="CDD" id="cd00311">
    <property type="entry name" value="TIM"/>
    <property type="match status" value="1"/>
</dbReference>
<dbReference type="FunFam" id="3.20.20.70:FF:000020">
    <property type="entry name" value="Triosephosphate isomerase"/>
    <property type="match status" value="1"/>
</dbReference>
<dbReference type="Gene3D" id="3.20.20.70">
    <property type="entry name" value="Aldolase class I"/>
    <property type="match status" value="1"/>
</dbReference>
<dbReference type="HAMAP" id="MF_00147_B">
    <property type="entry name" value="TIM_B"/>
    <property type="match status" value="1"/>
</dbReference>
<dbReference type="InterPro" id="IPR013785">
    <property type="entry name" value="Aldolase_TIM"/>
</dbReference>
<dbReference type="InterPro" id="IPR035990">
    <property type="entry name" value="TIM_sf"/>
</dbReference>
<dbReference type="InterPro" id="IPR022896">
    <property type="entry name" value="TrioseP_Isoase_bac/euk"/>
</dbReference>
<dbReference type="InterPro" id="IPR000652">
    <property type="entry name" value="Triosephosphate_isomerase"/>
</dbReference>
<dbReference type="InterPro" id="IPR020861">
    <property type="entry name" value="Triosephosphate_isomerase_AS"/>
</dbReference>
<dbReference type="NCBIfam" id="TIGR00419">
    <property type="entry name" value="tim"/>
    <property type="match status" value="1"/>
</dbReference>
<dbReference type="PANTHER" id="PTHR21139">
    <property type="entry name" value="TRIOSEPHOSPHATE ISOMERASE"/>
    <property type="match status" value="1"/>
</dbReference>
<dbReference type="PANTHER" id="PTHR21139:SF42">
    <property type="entry name" value="TRIOSEPHOSPHATE ISOMERASE"/>
    <property type="match status" value="1"/>
</dbReference>
<dbReference type="Pfam" id="PF00121">
    <property type="entry name" value="TIM"/>
    <property type="match status" value="1"/>
</dbReference>
<dbReference type="SUPFAM" id="SSF51351">
    <property type="entry name" value="Triosephosphate isomerase (TIM)"/>
    <property type="match status" value="1"/>
</dbReference>
<dbReference type="PROSITE" id="PS00171">
    <property type="entry name" value="TIM_1"/>
    <property type="match status" value="1"/>
</dbReference>
<dbReference type="PROSITE" id="PS51440">
    <property type="entry name" value="TIM_2"/>
    <property type="match status" value="1"/>
</dbReference>
<sequence>MRRKIVAGNWKLHGSRAFATELVAKLAAHMPLEGIDVVILPPLPYLGDLIEDFEAHHLSFGAQDVSSNEKGAYTGEVSASMLVDVGAGYGLVGHSERRQYHQESSELVARKFAAAIHAGLTPVLCVGESLEQREAGQTEAILRAQLEPVLALVGSAGFAGAVLAYEPIWAIGTGCTATPEQAQAVHAFLRGEVAKADARIADSLPILYGGSVKPDNAGELFAQPDVDGGLVGGASLVAEDFLAIARAAAAC</sequence>
<reference key="1">
    <citation type="journal article" date="2008" name="BMC Genomics">
        <title>Genome sequence and rapid evolution of the rice pathogen Xanthomonas oryzae pv. oryzae PXO99A.</title>
        <authorList>
            <person name="Salzberg S.L."/>
            <person name="Sommer D.D."/>
            <person name="Schatz M.C."/>
            <person name="Phillippy A.M."/>
            <person name="Rabinowicz P.D."/>
            <person name="Tsuge S."/>
            <person name="Furutani A."/>
            <person name="Ochiai H."/>
            <person name="Delcher A.L."/>
            <person name="Kelley D."/>
            <person name="Madupu R."/>
            <person name="Puiu D."/>
            <person name="Radune D."/>
            <person name="Shumway M."/>
            <person name="Trapnell C."/>
            <person name="Aparna G."/>
            <person name="Jha G."/>
            <person name="Pandey A."/>
            <person name="Patil P.B."/>
            <person name="Ishihara H."/>
            <person name="Meyer D.F."/>
            <person name="Szurek B."/>
            <person name="Verdier V."/>
            <person name="Koebnik R."/>
            <person name="Dow J.M."/>
            <person name="Ryan R.P."/>
            <person name="Hirata H."/>
            <person name="Tsuyumu S."/>
            <person name="Won Lee S."/>
            <person name="Seo Y.-S."/>
            <person name="Sriariyanum M."/>
            <person name="Ronald P.C."/>
            <person name="Sonti R.V."/>
            <person name="Van Sluys M.-A."/>
            <person name="Leach J.E."/>
            <person name="White F.F."/>
            <person name="Bogdanove A.J."/>
        </authorList>
    </citation>
    <scope>NUCLEOTIDE SEQUENCE [LARGE SCALE GENOMIC DNA]</scope>
    <source>
        <strain>PXO99A</strain>
    </source>
</reference>
<gene>
    <name evidence="1" type="primary">tpiA</name>
    <name type="ordered locus">PXO_01285</name>
</gene>
<keyword id="KW-0963">Cytoplasm</keyword>
<keyword id="KW-0312">Gluconeogenesis</keyword>
<keyword id="KW-0324">Glycolysis</keyword>
<keyword id="KW-0413">Isomerase</keyword>
<evidence type="ECO:0000255" key="1">
    <source>
        <dbReference type="HAMAP-Rule" id="MF_00147"/>
    </source>
</evidence>
<name>TPIS_XANOP</name>
<proteinExistence type="inferred from homology"/>
<comment type="function">
    <text evidence="1">Involved in the gluconeogenesis. Catalyzes stereospecifically the conversion of dihydroxyacetone phosphate (DHAP) to D-glyceraldehyde-3-phosphate (G3P).</text>
</comment>
<comment type="catalytic activity">
    <reaction evidence="1">
        <text>D-glyceraldehyde 3-phosphate = dihydroxyacetone phosphate</text>
        <dbReference type="Rhea" id="RHEA:18585"/>
        <dbReference type="ChEBI" id="CHEBI:57642"/>
        <dbReference type="ChEBI" id="CHEBI:59776"/>
        <dbReference type="EC" id="5.3.1.1"/>
    </reaction>
</comment>
<comment type="pathway">
    <text evidence="1">Carbohydrate biosynthesis; gluconeogenesis.</text>
</comment>
<comment type="pathway">
    <text evidence="1">Carbohydrate degradation; glycolysis; D-glyceraldehyde 3-phosphate from glycerone phosphate: step 1/1.</text>
</comment>
<comment type="subunit">
    <text evidence="1">Homodimer.</text>
</comment>
<comment type="subcellular location">
    <subcellularLocation>
        <location evidence="1">Cytoplasm</location>
    </subcellularLocation>
</comment>
<comment type="similarity">
    <text evidence="1">Belongs to the triosephosphate isomerase family.</text>
</comment>